<accession>A5ISZ7</accession>
<comment type="function">
    <text evidence="1">Major role in the synthesis of nucleoside triphosphates other than ATP. The ATP gamma phosphate is transferred to the NDP beta phosphate via a ping-pong mechanism, using a phosphorylated active-site intermediate.</text>
</comment>
<comment type="catalytic activity">
    <reaction evidence="1">
        <text>a 2'-deoxyribonucleoside 5'-diphosphate + ATP = a 2'-deoxyribonucleoside 5'-triphosphate + ADP</text>
        <dbReference type="Rhea" id="RHEA:44640"/>
        <dbReference type="ChEBI" id="CHEBI:30616"/>
        <dbReference type="ChEBI" id="CHEBI:61560"/>
        <dbReference type="ChEBI" id="CHEBI:73316"/>
        <dbReference type="ChEBI" id="CHEBI:456216"/>
        <dbReference type="EC" id="2.7.4.6"/>
    </reaction>
</comment>
<comment type="catalytic activity">
    <reaction evidence="1">
        <text>a ribonucleoside 5'-diphosphate + ATP = a ribonucleoside 5'-triphosphate + ADP</text>
        <dbReference type="Rhea" id="RHEA:18113"/>
        <dbReference type="ChEBI" id="CHEBI:30616"/>
        <dbReference type="ChEBI" id="CHEBI:57930"/>
        <dbReference type="ChEBI" id="CHEBI:61557"/>
        <dbReference type="ChEBI" id="CHEBI:456216"/>
        <dbReference type="EC" id="2.7.4.6"/>
    </reaction>
</comment>
<comment type="cofactor">
    <cofactor evidence="1">
        <name>Mg(2+)</name>
        <dbReference type="ChEBI" id="CHEBI:18420"/>
    </cofactor>
</comment>
<comment type="subunit">
    <text evidence="1">Homotetramer.</text>
</comment>
<comment type="subcellular location">
    <subcellularLocation>
        <location evidence="1">Cytoplasm</location>
    </subcellularLocation>
</comment>
<comment type="similarity">
    <text evidence="1">Belongs to the NDK family.</text>
</comment>
<feature type="chain" id="PRO_1000080982" description="Nucleoside diphosphate kinase">
    <location>
        <begin position="1"/>
        <end position="149"/>
    </location>
</feature>
<feature type="active site" description="Pros-phosphohistidine intermediate" evidence="1">
    <location>
        <position position="115"/>
    </location>
</feature>
<feature type="binding site" evidence="1">
    <location>
        <position position="9"/>
    </location>
    <ligand>
        <name>ATP</name>
        <dbReference type="ChEBI" id="CHEBI:30616"/>
    </ligand>
</feature>
<feature type="binding site" evidence="1">
    <location>
        <position position="57"/>
    </location>
    <ligand>
        <name>ATP</name>
        <dbReference type="ChEBI" id="CHEBI:30616"/>
    </ligand>
</feature>
<feature type="binding site" evidence="1">
    <location>
        <position position="85"/>
    </location>
    <ligand>
        <name>ATP</name>
        <dbReference type="ChEBI" id="CHEBI:30616"/>
    </ligand>
</feature>
<feature type="binding site" evidence="1">
    <location>
        <position position="91"/>
    </location>
    <ligand>
        <name>ATP</name>
        <dbReference type="ChEBI" id="CHEBI:30616"/>
    </ligand>
</feature>
<feature type="binding site" evidence="1">
    <location>
        <position position="102"/>
    </location>
    <ligand>
        <name>ATP</name>
        <dbReference type="ChEBI" id="CHEBI:30616"/>
    </ligand>
</feature>
<feature type="binding site" evidence="1">
    <location>
        <position position="112"/>
    </location>
    <ligand>
        <name>ATP</name>
        <dbReference type="ChEBI" id="CHEBI:30616"/>
    </ligand>
</feature>
<dbReference type="EC" id="2.7.4.6" evidence="1"/>
<dbReference type="EMBL" id="CP000703">
    <property type="protein sequence ID" value="ABQ49320.1"/>
    <property type="molecule type" value="Genomic_DNA"/>
</dbReference>
<dbReference type="RefSeq" id="WP_000442480.1">
    <property type="nucleotide sequence ID" value="NC_009487.1"/>
</dbReference>
<dbReference type="SMR" id="A5ISZ7"/>
<dbReference type="GeneID" id="66839658"/>
<dbReference type="KEGG" id="saj:SaurJH9_1526"/>
<dbReference type="HOGENOM" id="CLU_060216_6_3_9"/>
<dbReference type="GO" id="GO:0005737">
    <property type="term" value="C:cytoplasm"/>
    <property type="evidence" value="ECO:0007669"/>
    <property type="project" value="UniProtKB-SubCell"/>
</dbReference>
<dbReference type="GO" id="GO:0005524">
    <property type="term" value="F:ATP binding"/>
    <property type="evidence" value="ECO:0007669"/>
    <property type="project" value="UniProtKB-UniRule"/>
</dbReference>
<dbReference type="GO" id="GO:0046872">
    <property type="term" value="F:metal ion binding"/>
    <property type="evidence" value="ECO:0007669"/>
    <property type="project" value="UniProtKB-KW"/>
</dbReference>
<dbReference type="GO" id="GO:0004550">
    <property type="term" value="F:nucleoside diphosphate kinase activity"/>
    <property type="evidence" value="ECO:0007669"/>
    <property type="project" value="UniProtKB-UniRule"/>
</dbReference>
<dbReference type="GO" id="GO:0006241">
    <property type="term" value="P:CTP biosynthetic process"/>
    <property type="evidence" value="ECO:0007669"/>
    <property type="project" value="UniProtKB-UniRule"/>
</dbReference>
<dbReference type="GO" id="GO:0006183">
    <property type="term" value="P:GTP biosynthetic process"/>
    <property type="evidence" value="ECO:0007669"/>
    <property type="project" value="UniProtKB-UniRule"/>
</dbReference>
<dbReference type="GO" id="GO:0006228">
    <property type="term" value="P:UTP biosynthetic process"/>
    <property type="evidence" value="ECO:0007669"/>
    <property type="project" value="UniProtKB-UniRule"/>
</dbReference>
<dbReference type="CDD" id="cd04413">
    <property type="entry name" value="NDPk_I"/>
    <property type="match status" value="1"/>
</dbReference>
<dbReference type="FunFam" id="3.30.70.141:FF:000002">
    <property type="entry name" value="Nucleoside diphosphate kinase"/>
    <property type="match status" value="1"/>
</dbReference>
<dbReference type="Gene3D" id="3.30.70.141">
    <property type="entry name" value="Nucleoside diphosphate kinase-like domain"/>
    <property type="match status" value="1"/>
</dbReference>
<dbReference type="HAMAP" id="MF_00451">
    <property type="entry name" value="NDP_kinase"/>
    <property type="match status" value="1"/>
</dbReference>
<dbReference type="InterPro" id="IPR034907">
    <property type="entry name" value="NDK-like_dom"/>
</dbReference>
<dbReference type="InterPro" id="IPR036850">
    <property type="entry name" value="NDK-like_dom_sf"/>
</dbReference>
<dbReference type="InterPro" id="IPR001564">
    <property type="entry name" value="Nucleoside_diP_kinase"/>
</dbReference>
<dbReference type="InterPro" id="IPR023005">
    <property type="entry name" value="Nucleoside_diP_kinase_AS"/>
</dbReference>
<dbReference type="NCBIfam" id="NF001908">
    <property type="entry name" value="PRK00668.1"/>
    <property type="match status" value="1"/>
</dbReference>
<dbReference type="PANTHER" id="PTHR11349">
    <property type="entry name" value="NUCLEOSIDE DIPHOSPHATE KINASE"/>
    <property type="match status" value="1"/>
</dbReference>
<dbReference type="Pfam" id="PF00334">
    <property type="entry name" value="NDK"/>
    <property type="match status" value="1"/>
</dbReference>
<dbReference type="PRINTS" id="PR01243">
    <property type="entry name" value="NUCDPKINASE"/>
</dbReference>
<dbReference type="SMART" id="SM00562">
    <property type="entry name" value="NDK"/>
    <property type="match status" value="1"/>
</dbReference>
<dbReference type="SUPFAM" id="SSF54919">
    <property type="entry name" value="Nucleoside diphosphate kinase, NDK"/>
    <property type="match status" value="1"/>
</dbReference>
<dbReference type="PROSITE" id="PS00469">
    <property type="entry name" value="NDPK"/>
    <property type="match status" value="1"/>
</dbReference>
<dbReference type="PROSITE" id="PS51374">
    <property type="entry name" value="NDPK_LIKE"/>
    <property type="match status" value="1"/>
</dbReference>
<evidence type="ECO:0000255" key="1">
    <source>
        <dbReference type="HAMAP-Rule" id="MF_00451"/>
    </source>
</evidence>
<gene>
    <name evidence="1" type="primary">ndk</name>
    <name type="ordered locus">SaurJH9_1526</name>
</gene>
<organism>
    <name type="scientific">Staphylococcus aureus (strain JH9)</name>
    <dbReference type="NCBI Taxonomy" id="359786"/>
    <lineage>
        <taxon>Bacteria</taxon>
        <taxon>Bacillati</taxon>
        <taxon>Bacillota</taxon>
        <taxon>Bacilli</taxon>
        <taxon>Bacillales</taxon>
        <taxon>Staphylococcaceae</taxon>
        <taxon>Staphylococcus</taxon>
    </lineage>
</organism>
<proteinExistence type="inferred from homology"/>
<name>NDK_STAA9</name>
<reference key="1">
    <citation type="submission" date="2007-05" db="EMBL/GenBank/DDBJ databases">
        <title>Complete sequence of chromosome of Staphylococcus aureus subsp. aureus JH9.</title>
        <authorList>
            <consortium name="US DOE Joint Genome Institute"/>
            <person name="Copeland A."/>
            <person name="Lucas S."/>
            <person name="Lapidus A."/>
            <person name="Barry K."/>
            <person name="Detter J.C."/>
            <person name="Glavina del Rio T."/>
            <person name="Hammon N."/>
            <person name="Israni S."/>
            <person name="Pitluck S."/>
            <person name="Chain P."/>
            <person name="Malfatti S."/>
            <person name="Shin M."/>
            <person name="Vergez L."/>
            <person name="Schmutz J."/>
            <person name="Larimer F."/>
            <person name="Land M."/>
            <person name="Hauser L."/>
            <person name="Kyrpides N."/>
            <person name="Kim E."/>
            <person name="Tomasz A."/>
            <person name="Richardson P."/>
        </authorList>
    </citation>
    <scope>NUCLEOTIDE SEQUENCE [LARGE SCALE GENOMIC DNA]</scope>
    <source>
        <strain>JH9</strain>
    </source>
</reference>
<sequence length="149" mass="16575">MERTFLMIKPDAVQRNLIGEVISRIERKGLKLVGGKLMQVPMELAETHYGEHQGKPFYNDLISFITSAPVFAMVVEGEDAVNVSRHIIGSTNPSEASPGSIRGDLGLTVGRNIIHGSDSLESAEREINLWFNENEITSYASPRDAWLYE</sequence>
<protein>
    <recommendedName>
        <fullName evidence="1">Nucleoside diphosphate kinase</fullName>
        <shortName evidence="1">NDK</shortName>
        <shortName evidence="1">NDP kinase</shortName>
        <ecNumber evidence="1">2.7.4.6</ecNumber>
    </recommendedName>
    <alternativeName>
        <fullName evidence="1">Nucleoside-2-P kinase</fullName>
    </alternativeName>
</protein>
<keyword id="KW-0067">ATP-binding</keyword>
<keyword id="KW-0963">Cytoplasm</keyword>
<keyword id="KW-0418">Kinase</keyword>
<keyword id="KW-0460">Magnesium</keyword>
<keyword id="KW-0479">Metal-binding</keyword>
<keyword id="KW-0546">Nucleotide metabolism</keyword>
<keyword id="KW-0547">Nucleotide-binding</keyword>
<keyword id="KW-0597">Phosphoprotein</keyword>
<keyword id="KW-0808">Transferase</keyword>